<comment type="cofactor">
    <cofactor evidence="1">
        <name>Fe(2+)</name>
        <dbReference type="ChEBI" id="CHEBI:29033"/>
    </cofactor>
    <text evidence="1">Binds 1 Fe(2+) ion per subunit.</text>
</comment>
<comment type="cofactor">
    <cofactor evidence="1">
        <name>L-ascorbate</name>
        <dbReference type="ChEBI" id="CHEBI:38290"/>
    </cofactor>
</comment>
<sequence>MLIVIDALLAEAEVLKWRARLEDAEWLDGRGTGGTLSAAVKSNLQLPDTSELAINLGNTIVQKLGVHPLFLSAALPEKIYPPKFNCYRNGGAYGTHVDSAIMVMPNKQSLRTDISATLFLSDPDSYDGGELEIETAFGAQAVKLNAGDLVLYPSSSLHRVTPVTRGQRVASFIWIQSMVPDEAERALLFDLDQSIQSLISEKPADDPTLLRLTSVYHNLLRRYAKF</sequence>
<name>Y2553_TERTT</name>
<protein>
    <recommendedName>
        <fullName evidence="1">PKHD-type hydroxylase TERTU_2553</fullName>
        <ecNumber evidence="1">1.14.11.-</ecNumber>
    </recommendedName>
</protein>
<keyword id="KW-0223">Dioxygenase</keyword>
<keyword id="KW-0408">Iron</keyword>
<keyword id="KW-0479">Metal-binding</keyword>
<keyword id="KW-0560">Oxidoreductase</keyword>
<keyword id="KW-1185">Reference proteome</keyword>
<keyword id="KW-0847">Vitamin C</keyword>
<accession>C5BLP4</accession>
<dbReference type="EC" id="1.14.11.-" evidence="1"/>
<dbReference type="EMBL" id="CP001614">
    <property type="protein sequence ID" value="ACR11108.1"/>
    <property type="molecule type" value="Genomic_DNA"/>
</dbReference>
<dbReference type="RefSeq" id="WP_015817220.1">
    <property type="nucleotide sequence ID" value="NC_012997.1"/>
</dbReference>
<dbReference type="SMR" id="C5BLP4"/>
<dbReference type="STRING" id="377629.TERTU_2553"/>
<dbReference type="KEGG" id="ttu:TERTU_2553"/>
<dbReference type="eggNOG" id="COG3128">
    <property type="taxonomic scope" value="Bacteria"/>
</dbReference>
<dbReference type="HOGENOM" id="CLU_106663_0_0_6"/>
<dbReference type="OrthoDB" id="9812472at2"/>
<dbReference type="Proteomes" id="UP000009080">
    <property type="component" value="Chromosome"/>
</dbReference>
<dbReference type="GO" id="GO:0016706">
    <property type="term" value="F:2-oxoglutarate-dependent dioxygenase activity"/>
    <property type="evidence" value="ECO:0007669"/>
    <property type="project" value="UniProtKB-UniRule"/>
</dbReference>
<dbReference type="GO" id="GO:0005506">
    <property type="term" value="F:iron ion binding"/>
    <property type="evidence" value="ECO:0007669"/>
    <property type="project" value="UniProtKB-UniRule"/>
</dbReference>
<dbReference type="GO" id="GO:0031418">
    <property type="term" value="F:L-ascorbic acid binding"/>
    <property type="evidence" value="ECO:0007669"/>
    <property type="project" value="UniProtKB-KW"/>
</dbReference>
<dbReference type="GO" id="GO:0006974">
    <property type="term" value="P:DNA damage response"/>
    <property type="evidence" value="ECO:0007669"/>
    <property type="project" value="TreeGrafter"/>
</dbReference>
<dbReference type="GO" id="GO:0006879">
    <property type="term" value="P:intracellular iron ion homeostasis"/>
    <property type="evidence" value="ECO:0007669"/>
    <property type="project" value="TreeGrafter"/>
</dbReference>
<dbReference type="Gene3D" id="2.60.120.620">
    <property type="entry name" value="q2cbj1_9rhob like domain"/>
    <property type="match status" value="1"/>
</dbReference>
<dbReference type="Gene3D" id="4.10.860.20">
    <property type="entry name" value="Rabenosyn, Rab binding domain"/>
    <property type="match status" value="1"/>
</dbReference>
<dbReference type="HAMAP" id="MF_00657">
    <property type="entry name" value="Hydroxyl_YbiX"/>
    <property type="match status" value="1"/>
</dbReference>
<dbReference type="InterPro" id="IPR005123">
    <property type="entry name" value="Oxoglu/Fe-dep_dioxygenase_dom"/>
</dbReference>
<dbReference type="InterPro" id="IPR041097">
    <property type="entry name" value="PKHD_C"/>
</dbReference>
<dbReference type="InterPro" id="IPR023550">
    <property type="entry name" value="PKHD_hydroxylase"/>
</dbReference>
<dbReference type="InterPro" id="IPR006620">
    <property type="entry name" value="Pro_4_hyd_alph"/>
</dbReference>
<dbReference type="InterPro" id="IPR044862">
    <property type="entry name" value="Pro_4_hyd_alph_FE2OG_OXY"/>
</dbReference>
<dbReference type="NCBIfam" id="NF003974">
    <property type="entry name" value="PRK05467.1-3"/>
    <property type="match status" value="1"/>
</dbReference>
<dbReference type="NCBIfam" id="NF003975">
    <property type="entry name" value="PRK05467.1-4"/>
    <property type="match status" value="1"/>
</dbReference>
<dbReference type="PANTHER" id="PTHR41536">
    <property type="entry name" value="PKHD-TYPE HYDROXYLASE YBIX"/>
    <property type="match status" value="1"/>
</dbReference>
<dbReference type="PANTHER" id="PTHR41536:SF1">
    <property type="entry name" value="PKHD-TYPE HYDROXYLASE YBIX"/>
    <property type="match status" value="1"/>
</dbReference>
<dbReference type="Pfam" id="PF13640">
    <property type="entry name" value="2OG-FeII_Oxy_3"/>
    <property type="match status" value="1"/>
</dbReference>
<dbReference type="Pfam" id="PF18331">
    <property type="entry name" value="PKHD_C"/>
    <property type="match status" value="1"/>
</dbReference>
<dbReference type="SMART" id="SM00702">
    <property type="entry name" value="P4Hc"/>
    <property type="match status" value="1"/>
</dbReference>
<dbReference type="SUPFAM" id="SSF51197">
    <property type="entry name" value="Clavaminate synthase-like"/>
    <property type="match status" value="1"/>
</dbReference>
<dbReference type="PROSITE" id="PS51471">
    <property type="entry name" value="FE2OG_OXY"/>
    <property type="match status" value="1"/>
</dbReference>
<proteinExistence type="inferred from homology"/>
<reference key="1">
    <citation type="journal article" date="2009" name="PLoS ONE">
        <title>The complete genome of Teredinibacter turnerae T7901: an intracellular endosymbiont of marine wood-boring bivalves (shipworms).</title>
        <authorList>
            <person name="Yang J.C."/>
            <person name="Madupu R."/>
            <person name="Durkin A.S."/>
            <person name="Ekborg N.A."/>
            <person name="Pedamallu C.S."/>
            <person name="Hostetler J.B."/>
            <person name="Radune D."/>
            <person name="Toms B.S."/>
            <person name="Henrissat B."/>
            <person name="Coutinho P.M."/>
            <person name="Schwarz S."/>
            <person name="Field L."/>
            <person name="Trindade-Silva A.E."/>
            <person name="Soares C.A.G."/>
            <person name="Elshahawi S."/>
            <person name="Hanora A."/>
            <person name="Schmidt E.W."/>
            <person name="Haygood M.G."/>
            <person name="Posfai J."/>
            <person name="Benner J."/>
            <person name="Madinger C."/>
            <person name="Nove J."/>
            <person name="Anton B."/>
            <person name="Chaudhary K."/>
            <person name="Foster J."/>
            <person name="Holman A."/>
            <person name="Kumar S."/>
            <person name="Lessard P.A."/>
            <person name="Luyten Y.A."/>
            <person name="Slatko B."/>
            <person name="Wood N."/>
            <person name="Wu B."/>
            <person name="Teplitski M."/>
            <person name="Mougous J.D."/>
            <person name="Ward N."/>
            <person name="Eisen J.A."/>
            <person name="Badger J.H."/>
            <person name="Distel D.L."/>
        </authorList>
    </citation>
    <scope>NUCLEOTIDE SEQUENCE [LARGE SCALE GENOMIC DNA]</scope>
    <source>
        <strain>ATCC 39867 / T7901</strain>
    </source>
</reference>
<evidence type="ECO:0000255" key="1">
    <source>
        <dbReference type="HAMAP-Rule" id="MF_00657"/>
    </source>
</evidence>
<gene>
    <name type="ordered locus">TERTU_2553</name>
</gene>
<organism>
    <name type="scientific">Teredinibacter turnerae (strain ATCC 39867 / T7901)</name>
    <dbReference type="NCBI Taxonomy" id="377629"/>
    <lineage>
        <taxon>Bacteria</taxon>
        <taxon>Pseudomonadati</taxon>
        <taxon>Pseudomonadota</taxon>
        <taxon>Gammaproteobacteria</taxon>
        <taxon>Cellvibrionales</taxon>
        <taxon>Cellvibrionaceae</taxon>
        <taxon>Teredinibacter</taxon>
    </lineage>
</organism>
<feature type="chain" id="PRO_1000212443" description="PKHD-type hydroxylase TERTU_2553">
    <location>
        <begin position="1"/>
        <end position="226"/>
    </location>
</feature>
<feature type="domain" description="Fe2OG dioxygenase" evidence="1">
    <location>
        <begin position="78"/>
        <end position="177"/>
    </location>
</feature>
<feature type="binding site" evidence="1">
    <location>
        <position position="96"/>
    </location>
    <ligand>
        <name>Fe cation</name>
        <dbReference type="ChEBI" id="CHEBI:24875"/>
    </ligand>
</feature>
<feature type="binding site" evidence="1">
    <location>
        <position position="98"/>
    </location>
    <ligand>
        <name>Fe cation</name>
        <dbReference type="ChEBI" id="CHEBI:24875"/>
    </ligand>
</feature>
<feature type="binding site" evidence="1">
    <location>
        <position position="158"/>
    </location>
    <ligand>
        <name>Fe cation</name>
        <dbReference type="ChEBI" id="CHEBI:24875"/>
    </ligand>
</feature>
<feature type="binding site" evidence="1">
    <location>
        <position position="168"/>
    </location>
    <ligand>
        <name>2-oxoglutarate</name>
        <dbReference type="ChEBI" id="CHEBI:16810"/>
    </ligand>
</feature>